<reference key="1">
    <citation type="journal article" date="2004" name="Proc. Natl. Acad. Sci. U.S.A.">
        <title>Insights into the evolution of Yersinia pestis through whole-genome comparison with Yersinia pseudotuberculosis.</title>
        <authorList>
            <person name="Chain P.S.G."/>
            <person name="Carniel E."/>
            <person name="Larimer F.W."/>
            <person name="Lamerdin J."/>
            <person name="Stoutland P.O."/>
            <person name="Regala W.M."/>
            <person name="Georgescu A.M."/>
            <person name="Vergez L.M."/>
            <person name="Land M.L."/>
            <person name="Motin V.L."/>
            <person name="Brubaker R.R."/>
            <person name="Fowler J."/>
            <person name="Hinnebusch J."/>
            <person name="Marceau M."/>
            <person name="Medigue C."/>
            <person name="Simonet M."/>
            <person name="Chenal-Francisque V."/>
            <person name="Souza B."/>
            <person name="Dacheux D."/>
            <person name="Elliott J.M."/>
            <person name="Derbise A."/>
            <person name="Hauser L.J."/>
            <person name="Garcia E."/>
        </authorList>
    </citation>
    <scope>NUCLEOTIDE SEQUENCE [LARGE SCALE GENOMIC DNA]</scope>
    <source>
        <strain>IP32953</strain>
    </source>
</reference>
<proteinExistence type="inferred from homology"/>
<feature type="chain" id="PRO_1000056722" description="Protein FdhE homolog">
    <location>
        <begin position="1"/>
        <end position="309"/>
    </location>
</feature>
<evidence type="ECO:0000255" key="1">
    <source>
        <dbReference type="HAMAP-Rule" id="MF_00611"/>
    </source>
</evidence>
<name>FDHE_YERPS</name>
<sequence>MSIRIVPKDQLGKQREKGTTAGNIPPLLFANLKSLYTRRTERLQQLALDNPLADYLDFAAKITEAQQKALHDHPLVLDMQAELVQSAASGKPPLDGSVFPRTEHWRKLLSALIAELRHDAPDHILAVLDNLDKASVHELELYADALLNRDFSQVGSEKAPFIWAALSLYWAQMASQIPGKARAEYGEHRQFCPVCGSIPVSSVVHIGTHNGLRYLHCNLCESEWHVVRIKCSNCEQTRDLNYWSLDSELAAVKAESCGDCGTYLKILYQEKDPQVEAVADDLASLILDAKMEGEGFARSSINPFLFPGE</sequence>
<organism>
    <name type="scientific">Yersinia pseudotuberculosis serotype I (strain IP32953)</name>
    <dbReference type="NCBI Taxonomy" id="273123"/>
    <lineage>
        <taxon>Bacteria</taxon>
        <taxon>Pseudomonadati</taxon>
        <taxon>Pseudomonadota</taxon>
        <taxon>Gammaproteobacteria</taxon>
        <taxon>Enterobacterales</taxon>
        <taxon>Yersiniaceae</taxon>
        <taxon>Yersinia</taxon>
    </lineage>
</organism>
<protein>
    <recommendedName>
        <fullName evidence="1">Protein FdhE homolog</fullName>
    </recommendedName>
</protein>
<accession>Q663U4</accession>
<dbReference type="EMBL" id="BX936398">
    <property type="protein sequence ID" value="CAH23168.1"/>
    <property type="molecule type" value="Genomic_DNA"/>
</dbReference>
<dbReference type="RefSeq" id="WP_002209609.1">
    <property type="nucleotide sequence ID" value="NZ_CP009712.1"/>
</dbReference>
<dbReference type="SMR" id="Q663U4"/>
<dbReference type="GeneID" id="57974659"/>
<dbReference type="KEGG" id="ypo:BZ17_2649"/>
<dbReference type="KEGG" id="yps:YPTB3930"/>
<dbReference type="PATRIC" id="fig|273123.14.peg.2776"/>
<dbReference type="Proteomes" id="UP000001011">
    <property type="component" value="Chromosome"/>
</dbReference>
<dbReference type="GO" id="GO:0005829">
    <property type="term" value="C:cytosol"/>
    <property type="evidence" value="ECO:0007669"/>
    <property type="project" value="TreeGrafter"/>
</dbReference>
<dbReference type="GO" id="GO:0008199">
    <property type="term" value="F:ferric iron binding"/>
    <property type="evidence" value="ECO:0007669"/>
    <property type="project" value="TreeGrafter"/>
</dbReference>
<dbReference type="GO" id="GO:0051604">
    <property type="term" value="P:protein maturation"/>
    <property type="evidence" value="ECO:0007669"/>
    <property type="project" value="TreeGrafter"/>
</dbReference>
<dbReference type="CDD" id="cd16341">
    <property type="entry name" value="FdhE"/>
    <property type="match status" value="1"/>
</dbReference>
<dbReference type="FunFam" id="3.90.1670.10:FF:000001">
    <property type="entry name" value="Protein FdhE"/>
    <property type="match status" value="1"/>
</dbReference>
<dbReference type="Gene3D" id="3.90.1670.10">
    <property type="entry name" value="FdhE-like domain"/>
    <property type="match status" value="1"/>
</dbReference>
<dbReference type="HAMAP" id="MF_00611">
    <property type="entry name" value="FdeH"/>
    <property type="match status" value="1"/>
</dbReference>
<dbReference type="InterPro" id="IPR024064">
    <property type="entry name" value="FdhE-like_sf"/>
</dbReference>
<dbReference type="InterPro" id="IPR056796">
    <property type="entry name" value="FdhE_C"/>
</dbReference>
<dbReference type="InterPro" id="IPR056797">
    <property type="entry name" value="FdhE_central"/>
</dbReference>
<dbReference type="InterPro" id="IPR056774">
    <property type="entry name" value="FdhE_N"/>
</dbReference>
<dbReference type="InterPro" id="IPR006452">
    <property type="entry name" value="Formate_DH_accessory"/>
</dbReference>
<dbReference type="NCBIfam" id="TIGR01562">
    <property type="entry name" value="FdhE"/>
    <property type="match status" value="1"/>
</dbReference>
<dbReference type="NCBIfam" id="NF002925">
    <property type="entry name" value="PRK03564.1"/>
    <property type="match status" value="1"/>
</dbReference>
<dbReference type="PANTHER" id="PTHR37689">
    <property type="entry name" value="PROTEIN FDHE"/>
    <property type="match status" value="1"/>
</dbReference>
<dbReference type="PANTHER" id="PTHR37689:SF1">
    <property type="entry name" value="PROTEIN FDHE"/>
    <property type="match status" value="1"/>
</dbReference>
<dbReference type="Pfam" id="PF24860">
    <property type="entry name" value="FdhE_C"/>
    <property type="match status" value="1"/>
</dbReference>
<dbReference type="Pfam" id="PF24859">
    <property type="entry name" value="FdhE_central"/>
    <property type="match status" value="1"/>
</dbReference>
<dbReference type="Pfam" id="PF04216">
    <property type="entry name" value="FdhE_N"/>
    <property type="match status" value="1"/>
</dbReference>
<dbReference type="PIRSF" id="PIRSF018296">
    <property type="entry name" value="Format_dh_formtn"/>
    <property type="match status" value="1"/>
</dbReference>
<dbReference type="SUPFAM" id="SSF144020">
    <property type="entry name" value="FdhE-like"/>
    <property type="match status" value="1"/>
</dbReference>
<comment type="function">
    <text evidence="1">Necessary for formate dehydrogenase activity.</text>
</comment>
<comment type="subcellular location">
    <subcellularLocation>
        <location evidence="1">Cytoplasm</location>
    </subcellularLocation>
</comment>
<comment type="similarity">
    <text evidence="1">Belongs to the FdhE family.</text>
</comment>
<gene>
    <name evidence="1" type="primary">fdhE</name>
    <name type="ordered locus">YPTB3930</name>
</gene>
<keyword id="KW-0963">Cytoplasm</keyword>